<accession>Q97WW2</accession>
<evidence type="ECO:0000250" key="1"/>
<evidence type="ECO:0000305" key="2"/>
<name>CAS5C_SACS2</name>
<reference key="1">
    <citation type="journal article" date="2001" name="Proc. Natl. Acad. Sci. U.S.A.">
        <title>The complete genome of the crenarchaeon Sulfolobus solfataricus P2.</title>
        <authorList>
            <person name="She Q."/>
            <person name="Singh R.K."/>
            <person name="Confalonieri F."/>
            <person name="Zivanovic Y."/>
            <person name="Allard G."/>
            <person name="Awayez M.J."/>
            <person name="Chan-Weiher C.C.-Y."/>
            <person name="Clausen I.G."/>
            <person name="Curtis B.A."/>
            <person name="De Moors A."/>
            <person name="Erauso G."/>
            <person name="Fletcher C."/>
            <person name="Gordon P.M.K."/>
            <person name="Heikamp-de Jong I."/>
            <person name="Jeffries A.C."/>
            <person name="Kozera C.J."/>
            <person name="Medina N."/>
            <person name="Peng X."/>
            <person name="Thi-Ngoc H.P."/>
            <person name="Redder P."/>
            <person name="Schenk M.E."/>
            <person name="Theriault C."/>
            <person name="Tolstrup N."/>
            <person name="Charlebois R.L."/>
            <person name="Doolittle W.F."/>
            <person name="Duguet M."/>
            <person name="Gaasterland T."/>
            <person name="Garrett R.A."/>
            <person name="Ragan M.A."/>
            <person name="Sensen C.W."/>
            <person name="Van der Oost J."/>
        </authorList>
    </citation>
    <scope>NUCLEOTIDE SEQUENCE [LARGE SCALE GENOMIC DNA]</scope>
    <source>
        <strain>ATCC 35092 / DSM 1617 / JCM 11322 / P2</strain>
    </source>
</reference>
<feature type="chain" id="PRO_0000417894" description="CRISPR-associated protein Cas5 3">
    <location>
        <begin position="1"/>
        <end position="240"/>
    </location>
</feature>
<comment type="function">
    <text evidence="1">CRISPR (clustered regularly interspaced short palindromic repeat) is an adaptive immune system that provides protection against mobile genetic elements (viruses, transposable elements and conjugative plasmids). CRISPR clusters contain spacers, sequences complementary to antecedent mobile elements, and target invading nucleic acids. CRISPR clusters are transcribed and processed into CRISPR RNA (crRNA) (By similarity).</text>
</comment>
<comment type="subunit">
    <text evidence="2">Part of the aCascade ribonucleoprotein complex.</text>
</comment>
<comment type="similarity">
    <text evidence="2">Belongs to the CRISPR-associated protein Cas5 family. Subtype I-A/Apern subfamily.</text>
</comment>
<sequence>MIYSKVFLKLHWGFSVVKPSAAKAKSGFYLPPPTTLIGALSYGKFRGIDNTNLGKIYGSPAYNFRNVMATARLESEGAYTEDIVRNVISYFQRKDRRDNPRYIYGVIPTGKVYMPNGTLVVVYVTDSMSKEELEKLSWSITRIGGKECLVSVENVEIGEAKKVSGRMKTRYYFRDTVKVVGKKEFLEYVTFWEENGYIWGKEGGPIRYILPVATYPLASKEVEVEAKEAYEVGGEYVVFS</sequence>
<organism>
    <name type="scientific">Saccharolobus solfataricus (strain ATCC 35092 / DSM 1617 / JCM 11322 / P2)</name>
    <name type="common">Sulfolobus solfataricus</name>
    <dbReference type="NCBI Taxonomy" id="273057"/>
    <lineage>
        <taxon>Archaea</taxon>
        <taxon>Thermoproteota</taxon>
        <taxon>Thermoprotei</taxon>
        <taxon>Sulfolobales</taxon>
        <taxon>Sulfolobaceae</taxon>
        <taxon>Saccharolobus</taxon>
    </lineage>
</organism>
<protein>
    <recommendedName>
        <fullName>CRISPR-associated protein Cas5 3</fullName>
    </recommendedName>
</protein>
<proteinExistence type="inferred from homology"/>
<keyword id="KW-0051">Antiviral defense</keyword>
<keyword id="KW-1185">Reference proteome</keyword>
<dbReference type="EMBL" id="AE006641">
    <property type="protein sequence ID" value="AAK42188.1"/>
    <property type="molecule type" value="Genomic_DNA"/>
</dbReference>
<dbReference type="PIR" id="E90366">
    <property type="entry name" value="E90366"/>
</dbReference>
<dbReference type="SMR" id="Q97WW2"/>
<dbReference type="STRING" id="273057.SSO1998"/>
<dbReference type="PaxDb" id="273057-SSO1998"/>
<dbReference type="EnsemblBacteria" id="AAK42188">
    <property type="protein sequence ID" value="AAK42188"/>
    <property type="gene ID" value="SSO1998"/>
</dbReference>
<dbReference type="KEGG" id="sso:SSO1998"/>
<dbReference type="PATRIC" id="fig|273057.12.peg.2075"/>
<dbReference type="eggNOG" id="arCOG02670">
    <property type="taxonomic scope" value="Archaea"/>
</dbReference>
<dbReference type="HOGENOM" id="CLU_1154391_0_0_2"/>
<dbReference type="InParanoid" id="Q97WW2"/>
<dbReference type="PhylomeDB" id="Q97WW2"/>
<dbReference type="Proteomes" id="UP000001974">
    <property type="component" value="Chromosome"/>
</dbReference>
<dbReference type="GO" id="GO:0051607">
    <property type="term" value="P:defense response to virus"/>
    <property type="evidence" value="ECO:0007669"/>
    <property type="project" value="UniProtKB-KW"/>
</dbReference>
<dbReference type="CDD" id="cd09753">
    <property type="entry name" value="Cas5_I-A"/>
    <property type="match status" value="1"/>
</dbReference>
<dbReference type="Gene3D" id="3.30.70.3120">
    <property type="match status" value="1"/>
</dbReference>
<dbReference type="InterPro" id="IPR013422">
    <property type="entry name" value="CRISPR-assoc_prot_Cas5_N"/>
</dbReference>
<dbReference type="InterPro" id="IPR010153">
    <property type="entry name" value="CRISPR-assoc_prot_Cas5a-typ"/>
</dbReference>
<dbReference type="InterPro" id="IPR053725">
    <property type="entry name" value="CRISPR_Cas5_sf"/>
</dbReference>
<dbReference type="NCBIfam" id="TIGR01874">
    <property type="entry name" value="cas_cas5a"/>
    <property type="match status" value="1"/>
</dbReference>
<dbReference type="NCBIfam" id="TIGR02593">
    <property type="entry name" value="CRISPR_cas5"/>
    <property type="match status" value="1"/>
</dbReference>
<gene>
    <name type="primary">cas5c</name>
    <name type="ordered locus">SSO1998</name>
</gene>